<sequence length="80" mass="8911">MASKKPENMSFESTIEELEQLVEQLESGDLALDEALRKFERGISLARAGQLKLDDAEQRVRILLSNSDDAPLSDFSDVAE</sequence>
<feature type="chain" id="PRO_1000072051" description="Exodeoxyribonuclease 7 small subunit">
    <location>
        <begin position="1"/>
        <end position="80"/>
    </location>
</feature>
<name>EX7S_VIBC3</name>
<protein>
    <recommendedName>
        <fullName evidence="1">Exodeoxyribonuclease 7 small subunit</fullName>
        <ecNumber evidence="1">3.1.11.6</ecNumber>
    </recommendedName>
    <alternativeName>
        <fullName evidence="1">Exodeoxyribonuclease VII small subunit</fullName>
        <shortName evidence="1">Exonuclease VII small subunit</shortName>
    </alternativeName>
</protein>
<comment type="function">
    <text evidence="1">Bidirectionally degrades single-stranded DNA into large acid-insoluble oligonucleotides, which are then degraded further into small acid-soluble oligonucleotides.</text>
</comment>
<comment type="catalytic activity">
    <reaction evidence="1">
        <text>Exonucleolytic cleavage in either 5'- to 3'- or 3'- to 5'-direction to yield nucleoside 5'-phosphates.</text>
        <dbReference type="EC" id="3.1.11.6"/>
    </reaction>
</comment>
<comment type="subunit">
    <text evidence="1">Heterooligomer composed of large and small subunits.</text>
</comment>
<comment type="subcellular location">
    <subcellularLocation>
        <location evidence="1">Cytoplasm</location>
    </subcellularLocation>
</comment>
<comment type="similarity">
    <text evidence="1">Belongs to the XseB family.</text>
</comment>
<accession>A5F333</accession>
<accession>C3LYQ5</accession>
<evidence type="ECO:0000255" key="1">
    <source>
        <dbReference type="HAMAP-Rule" id="MF_00337"/>
    </source>
</evidence>
<proteinExistence type="inferred from homology"/>
<keyword id="KW-0963">Cytoplasm</keyword>
<keyword id="KW-0269">Exonuclease</keyword>
<keyword id="KW-0378">Hydrolase</keyword>
<keyword id="KW-0540">Nuclease</keyword>
<gene>
    <name evidence="1" type="primary">xseB</name>
    <name type="ordered locus">VC0395_A0414</name>
    <name type="ordered locus">VC395_0907</name>
</gene>
<organism>
    <name type="scientific">Vibrio cholerae serotype O1 (strain ATCC 39541 / Classical Ogawa 395 / O395)</name>
    <dbReference type="NCBI Taxonomy" id="345073"/>
    <lineage>
        <taxon>Bacteria</taxon>
        <taxon>Pseudomonadati</taxon>
        <taxon>Pseudomonadota</taxon>
        <taxon>Gammaproteobacteria</taxon>
        <taxon>Vibrionales</taxon>
        <taxon>Vibrionaceae</taxon>
        <taxon>Vibrio</taxon>
    </lineage>
</organism>
<reference key="1">
    <citation type="submission" date="2007-03" db="EMBL/GenBank/DDBJ databases">
        <authorList>
            <person name="Heidelberg J."/>
        </authorList>
    </citation>
    <scope>NUCLEOTIDE SEQUENCE [LARGE SCALE GENOMIC DNA]</scope>
    <source>
        <strain>ATCC 39541 / Classical Ogawa 395 / O395</strain>
    </source>
</reference>
<reference key="2">
    <citation type="journal article" date="2008" name="PLoS ONE">
        <title>A recalibrated molecular clock and independent origins for the cholera pandemic clones.</title>
        <authorList>
            <person name="Feng L."/>
            <person name="Reeves P.R."/>
            <person name="Lan R."/>
            <person name="Ren Y."/>
            <person name="Gao C."/>
            <person name="Zhou Z."/>
            <person name="Ren Y."/>
            <person name="Cheng J."/>
            <person name="Wang W."/>
            <person name="Wang J."/>
            <person name="Qian W."/>
            <person name="Li D."/>
            <person name="Wang L."/>
        </authorList>
    </citation>
    <scope>NUCLEOTIDE SEQUENCE [LARGE SCALE GENOMIC DNA]</scope>
    <source>
        <strain>ATCC 39541 / Classical Ogawa 395 / O395</strain>
    </source>
</reference>
<dbReference type="EC" id="3.1.11.6" evidence="1"/>
<dbReference type="EMBL" id="CP000627">
    <property type="protein sequence ID" value="ABQ21726.1"/>
    <property type="molecule type" value="Genomic_DNA"/>
</dbReference>
<dbReference type="EMBL" id="CP001235">
    <property type="protein sequence ID" value="ACP08921.1"/>
    <property type="molecule type" value="Genomic_DNA"/>
</dbReference>
<dbReference type="RefSeq" id="WP_000157114.1">
    <property type="nucleotide sequence ID" value="NZ_JAACZH010000033.1"/>
</dbReference>
<dbReference type="SMR" id="A5F333"/>
<dbReference type="GeneID" id="88784921"/>
<dbReference type="KEGG" id="vco:VC0395_A0414"/>
<dbReference type="KEGG" id="vcr:VC395_0907"/>
<dbReference type="PATRIC" id="fig|345073.21.peg.877"/>
<dbReference type="eggNOG" id="COG1722">
    <property type="taxonomic scope" value="Bacteria"/>
</dbReference>
<dbReference type="HOGENOM" id="CLU_145918_3_3_6"/>
<dbReference type="OrthoDB" id="5591562at2"/>
<dbReference type="Proteomes" id="UP000000249">
    <property type="component" value="Chromosome 2"/>
</dbReference>
<dbReference type="GO" id="GO:0005829">
    <property type="term" value="C:cytosol"/>
    <property type="evidence" value="ECO:0007669"/>
    <property type="project" value="TreeGrafter"/>
</dbReference>
<dbReference type="GO" id="GO:0009318">
    <property type="term" value="C:exodeoxyribonuclease VII complex"/>
    <property type="evidence" value="ECO:0007669"/>
    <property type="project" value="InterPro"/>
</dbReference>
<dbReference type="GO" id="GO:0008855">
    <property type="term" value="F:exodeoxyribonuclease VII activity"/>
    <property type="evidence" value="ECO:0007669"/>
    <property type="project" value="UniProtKB-UniRule"/>
</dbReference>
<dbReference type="GO" id="GO:0006308">
    <property type="term" value="P:DNA catabolic process"/>
    <property type="evidence" value="ECO:0007669"/>
    <property type="project" value="UniProtKB-UniRule"/>
</dbReference>
<dbReference type="FunFam" id="1.10.287.1040:FF:000001">
    <property type="entry name" value="Exodeoxyribonuclease 7 small subunit"/>
    <property type="match status" value="1"/>
</dbReference>
<dbReference type="Gene3D" id="1.10.287.1040">
    <property type="entry name" value="Exonuclease VII, small subunit"/>
    <property type="match status" value="1"/>
</dbReference>
<dbReference type="HAMAP" id="MF_00337">
    <property type="entry name" value="Exonuc_7_S"/>
    <property type="match status" value="1"/>
</dbReference>
<dbReference type="InterPro" id="IPR003761">
    <property type="entry name" value="Exonuc_VII_S"/>
</dbReference>
<dbReference type="InterPro" id="IPR037004">
    <property type="entry name" value="Exonuc_VII_ssu_sf"/>
</dbReference>
<dbReference type="NCBIfam" id="NF002137">
    <property type="entry name" value="PRK00977.1-1"/>
    <property type="match status" value="1"/>
</dbReference>
<dbReference type="NCBIfam" id="NF002140">
    <property type="entry name" value="PRK00977.1-4"/>
    <property type="match status" value="1"/>
</dbReference>
<dbReference type="NCBIfam" id="TIGR01280">
    <property type="entry name" value="xseB"/>
    <property type="match status" value="1"/>
</dbReference>
<dbReference type="PANTHER" id="PTHR34137">
    <property type="entry name" value="EXODEOXYRIBONUCLEASE 7 SMALL SUBUNIT"/>
    <property type="match status" value="1"/>
</dbReference>
<dbReference type="PANTHER" id="PTHR34137:SF1">
    <property type="entry name" value="EXODEOXYRIBONUCLEASE 7 SMALL SUBUNIT"/>
    <property type="match status" value="1"/>
</dbReference>
<dbReference type="Pfam" id="PF02609">
    <property type="entry name" value="Exonuc_VII_S"/>
    <property type="match status" value="1"/>
</dbReference>
<dbReference type="PIRSF" id="PIRSF006488">
    <property type="entry name" value="Exonuc_VII_S"/>
    <property type="match status" value="1"/>
</dbReference>
<dbReference type="SUPFAM" id="SSF116842">
    <property type="entry name" value="XseB-like"/>
    <property type="match status" value="1"/>
</dbReference>